<evidence type="ECO:0000305" key="1"/>
<evidence type="ECO:0007744" key="2">
    <source>
    </source>
</evidence>
<name>Y1396_ARATH</name>
<feature type="initiator methionine" description="Removed" evidence="2">
    <location>
        <position position="1"/>
    </location>
</feature>
<feature type="chain" id="PRO_0000363127" description="UPF0725 protein At1g23960">
    <location>
        <begin position="2"/>
        <end position="302"/>
    </location>
</feature>
<feature type="modified residue" description="N-acetylalanine" evidence="2">
    <location>
        <position position="2"/>
    </location>
</feature>
<keyword id="KW-0007">Acetylation</keyword>
<keyword id="KW-1185">Reference proteome</keyword>
<proteinExistence type="evidence at protein level"/>
<gene>
    <name type="ordered locus">At1g23960</name>
    <name type="ORF">T23E23.14</name>
</gene>
<sequence length="302" mass="34825">MATDDFFSLQREYWRQVAESDGFDIESVQIPPSMYGRINGLIPHNCEINTPLPYRVLGKHYAKLGLHRYNMLKGTKFEFGRLMKFNMLQNCVASFYITLEAYDYGVPGTSHPQTFQVRIDEKIFGSLDLTVSIARRTTDEVTTKKPFIHHYHGGAVADNIIFKGELPDWPSDDVLKDRERFYVIMNESEWRATAWISLYLELVLCAHDKFITNTDLSRLSIEKVAIETSIGDALLYERLEAKSANVYIWFKRLEKPRVPQQVFVTGMDVERKAIIRRVMDSTGYLTLVGKLCGGVTKVRQFN</sequence>
<accession>Q8RXM6</accession>
<accession>Q9LR96</accession>
<organism>
    <name type="scientific">Arabidopsis thaliana</name>
    <name type="common">Mouse-ear cress</name>
    <dbReference type="NCBI Taxonomy" id="3702"/>
    <lineage>
        <taxon>Eukaryota</taxon>
        <taxon>Viridiplantae</taxon>
        <taxon>Streptophyta</taxon>
        <taxon>Embryophyta</taxon>
        <taxon>Tracheophyta</taxon>
        <taxon>Spermatophyta</taxon>
        <taxon>Magnoliopsida</taxon>
        <taxon>eudicotyledons</taxon>
        <taxon>Gunneridae</taxon>
        <taxon>Pentapetalae</taxon>
        <taxon>rosids</taxon>
        <taxon>malvids</taxon>
        <taxon>Brassicales</taxon>
        <taxon>Brassicaceae</taxon>
        <taxon>Camelineae</taxon>
        <taxon>Arabidopsis</taxon>
    </lineage>
</organism>
<protein>
    <recommendedName>
        <fullName>UPF0725 protein At1g23960</fullName>
    </recommendedName>
</protein>
<dbReference type="EMBL" id="AC002423">
    <property type="protein sequence ID" value="AAF87154.1"/>
    <property type="status" value="ALT_SEQ"/>
    <property type="molecule type" value="Genomic_DNA"/>
</dbReference>
<dbReference type="EMBL" id="CP002684">
    <property type="protein sequence ID" value="AEE30458.1"/>
    <property type="molecule type" value="Genomic_DNA"/>
</dbReference>
<dbReference type="EMBL" id="CP002684">
    <property type="protein sequence ID" value="AEE30459.1"/>
    <property type="molecule type" value="Genomic_DNA"/>
</dbReference>
<dbReference type="EMBL" id="AY080804">
    <property type="protein sequence ID" value="AAL87285.1"/>
    <property type="molecule type" value="mRNA"/>
</dbReference>
<dbReference type="EMBL" id="AY117256">
    <property type="protein sequence ID" value="AAM51331.1"/>
    <property type="molecule type" value="mRNA"/>
</dbReference>
<dbReference type="PIR" id="G86373">
    <property type="entry name" value="G86373"/>
</dbReference>
<dbReference type="RefSeq" id="NP_001031086.1">
    <property type="nucleotide sequence ID" value="NM_001036009.1"/>
</dbReference>
<dbReference type="RefSeq" id="NP_173807.2">
    <property type="nucleotide sequence ID" value="NM_102243.4"/>
</dbReference>
<dbReference type="SMR" id="Q8RXM6"/>
<dbReference type="FunCoup" id="Q8RXM6">
    <property type="interactions" value="107"/>
</dbReference>
<dbReference type="STRING" id="3702.Q8RXM6"/>
<dbReference type="iPTMnet" id="Q8RXM6"/>
<dbReference type="PaxDb" id="3702-AT1G23960.2"/>
<dbReference type="ProteomicsDB" id="242434"/>
<dbReference type="DNASU" id="839007"/>
<dbReference type="EnsemblPlants" id="AT1G23960.1">
    <property type="protein sequence ID" value="AT1G23960.1"/>
    <property type="gene ID" value="AT1G23960"/>
</dbReference>
<dbReference type="EnsemblPlants" id="AT1G23960.2">
    <property type="protein sequence ID" value="AT1G23960.2"/>
    <property type="gene ID" value="AT1G23960"/>
</dbReference>
<dbReference type="GeneID" id="839007"/>
<dbReference type="Gramene" id="AT1G23960.1">
    <property type="protein sequence ID" value="AT1G23960.1"/>
    <property type="gene ID" value="AT1G23960"/>
</dbReference>
<dbReference type="Gramene" id="AT1G23960.2">
    <property type="protein sequence ID" value="AT1G23960.2"/>
    <property type="gene ID" value="AT1G23960"/>
</dbReference>
<dbReference type="KEGG" id="ath:AT1G23960"/>
<dbReference type="Araport" id="AT1G23960"/>
<dbReference type="TAIR" id="AT1G23960"/>
<dbReference type="HOGENOM" id="CLU_053767_0_1_1"/>
<dbReference type="InParanoid" id="Q8RXM6"/>
<dbReference type="PhylomeDB" id="Q8RXM6"/>
<dbReference type="PRO" id="PR:Q8RXM6"/>
<dbReference type="Proteomes" id="UP000006548">
    <property type="component" value="Chromosome 1"/>
</dbReference>
<dbReference type="ExpressionAtlas" id="Q8RXM6">
    <property type="expression patterns" value="baseline and differential"/>
</dbReference>
<dbReference type="InterPro" id="IPR006462">
    <property type="entry name" value="MS5"/>
</dbReference>
<dbReference type="NCBIfam" id="TIGR01572">
    <property type="entry name" value="A_thl_para_3677"/>
    <property type="match status" value="1"/>
</dbReference>
<dbReference type="PANTHER" id="PTHR31260:SF77">
    <property type="entry name" value="(RAPE) HYPOTHETICAL PROTEIN"/>
    <property type="match status" value="1"/>
</dbReference>
<dbReference type="PANTHER" id="PTHR31260">
    <property type="entry name" value="CYSTATIN/MONELLIN SUPERFAMILY PROTEIN"/>
    <property type="match status" value="1"/>
</dbReference>
<dbReference type="Pfam" id="PF04776">
    <property type="entry name" value="protein_MS5"/>
    <property type="match status" value="1"/>
</dbReference>
<reference key="1">
    <citation type="journal article" date="2000" name="Nature">
        <title>Sequence and analysis of chromosome 1 of the plant Arabidopsis thaliana.</title>
        <authorList>
            <person name="Theologis A."/>
            <person name="Ecker J.R."/>
            <person name="Palm C.J."/>
            <person name="Federspiel N.A."/>
            <person name="Kaul S."/>
            <person name="White O."/>
            <person name="Alonso J."/>
            <person name="Altafi H."/>
            <person name="Araujo R."/>
            <person name="Bowman C.L."/>
            <person name="Brooks S.Y."/>
            <person name="Buehler E."/>
            <person name="Chan A."/>
            <person name="Chao Q."/>
            <person name="Chen H."/>
            <person name="Cheuk R.F."/>
            <person name="Chin C.W."/>
            <person name="Chung M.K."/>
            <person name="Conn L."/>
            <person name="Conway A.B."/>
            <person name="Conway A.R."/>
            <person name="Creasy T.H."/>
            <person name="Dewar K."/>
            <person name="Dunn P."/>
            <person name="Etgu P."/>
            <person name="Feldblyum T.V."/>
            <person name="Feng J.-D."/>
            <person name="Fong B."/>
            <person name="Fujii C.Y."/>
            <person name="Gill J.E."/>
            <person name="Goldsmith A.D."/>
            <person name="Haas B."/>
            <person name="Hansen N.F."/>
            <person name="Hughes B."/>
            <person name="Huizar L."/>
            <person name="Hunter J.L."/>
            <person name="Jenkins J."/>
            <person name="Johnson-Hopson C."/>
            <person name="Khan S."/>
            <person name="Khaykin E."/>
            <person name="Kim C.J."/>
            <person name="Koo H.L."/>
            <person name="Kremenetskaia I."/>
            <person name="Kurtz D.B."/>
            <person name="Kwan A."/>
            <person name="Lam B."/>
            <person name="Langin-Hooper S."/>
            <person name="Lee A."/>
            <person name="Lee J.M."/>
            <person name="Lenz C.A."/>
            <person name="Li J.H."/>
            <person name="Li Y.-P."/>
            <person name="Lin X."/>
            <person name="Liu S.X."/>
            <person name="Liu Z.A."/>
            <person name="Luros J.S."/>
            <person name="Maiti R."/>
            <person name="Marziali A."/>
            <person name="Militscher J."/>
            <person name="Miranda M."/>
            <person name="Nguyen M."/>
            <person name="Nierman W.C."/>
            <person name="Osborne B.I."/>
            <person name="Pai G."/>
            <person name="Peterson J."/>
            <person name="Pham P.K."/>
            <person name="Rizzo M."/>
            <person name="Rooney T."/>
            <person name="Rowley D."/>
            <person name="Sakano H."/>
            <person name="Salzberg S.L."/>
            <person name="Schwartz J.R."/>
            <person name="Shinn P."/>
            <person name="Southwick A.M."/>
            <person name="Sun H."/>
            <person name="Tallon L.J."/>
            <person name="Tambunga G."/>
            <person name="Toriumi M.J."/>
            <person name="Town C.D."/>
            <person name="Utterback T."/>
            <person name="Van Aken S."/>
            <person name="Vaysberg M."/>
            <person name="Vysotskaia V.S."/>
            <person name="Walker M."/>
            <person name="Wu D."/>
            <person name="Yu G."/>
            <person name="Fraser C.M."/>
            <person name="Venter J.C."/>
            <person name="Davis R.W."/>
        </authorList>
    </citation>
    <scope>NUCLEOTIDE SEQUENCE [LARGE SCALE GENOMIC DNA]</scope>
    <source>
        <strain>cv. Columbia</strain>
    </source>
</reference>
<reference key="2">
    <citation type="journal article" date="2017" name="Plant J.">
        <title>Araport11: a complete reannotation of the Arabidopsis thaliana reference genome.</title>
        <authorList>
            <person name="Cheng C.Y."/>
            <person name="Krishnakumar V."/>
            <person name="Chan A.P."/>
            <person name="Thibaud-Nissen F."/>
            <person name="Schobel S."/>
            <person name="Town C.D."/>
        </authorList>
    </citation>
    <scope>GENOME REANNOTATION</scope>
    <source>
        <strain>cv. Columbia</strain>
    </source>
</reference>
<reference key="3">
    <citation type="journal article" date="2003" name="Science">
        <title>Empirical analysis of transcriptional activity in the Arabidopsis genome.</title>
        <authorList>
            <person name="Yamada K."/>
            <person name="Lim J."/>
            <person name="Dale J.M."/>
            <person name="Chen H."/>
            <person name="Shinn P."/>
            <person name="Palm C.J."/>
            <person name="Southwick A.M."/>
            <person name="Wu H.C."/>
            <person name="Kim C.J."/>
            <person name="Nguyen M."/>
            <person name="Pham P.K."/>
            <person name="Cheuk R.F."/>
            <person name="Karlin-Newmann G."/>
            <person name="Liu S.X."/>
            <person name="Lam B."/>
            <person name="Sakano H."/>
            <person name="Wu T."/>
            <person name="Yu G."/>
            <person name="Miranda M."/>
            <person name="Quach H.L."/>
            <person name="Tripp M."/>
            <person name="Chang C.H."/>
            <person name="Lee J.M."/>
            <person name="Toriumi M.J."/>
            <person name="Chan M.M."/>
            <person name="Tang C.C."/>
            <person name="Onodera C.S."/>
            <person name="Deng J.M."/>
            <person name="Akiyama K."/>
            <person name="Ansari Y."/>
            <person name="Arakawa T."/>
            <person name="Banh J."/>
            <person name="Banno F."/>
            <person name="Bowser L."/>
            <person name="Brooks S.Y."/>
            <person name="Carninci P."/>
            <person name="Chao Q."/>
            <person name="Choy N."/>
            <person name="Enju A."/>
            <person name="Goldsmith A.D."/>
            <person name="Gurjal M."/>
            <person name="Hansen N.F."/>
            <person name="Hayashizaki Y."/>
            <person name="Johnson-Hopson C."/>
            <person name="Hsuan V.W."/>
            <person name="Iida K."/>
            <person name="Karnes M."/>
            <person name="Khan S."/>
            <person name="Koesema E."/>
            <person name="Ishida J."/>
            <person name="Jiang P.X."/>
            <person name="Jones T."/>
            <person name="Kawai J."/>
            <person name="Kamiya A."/>
            <person name="Meyers C."/>
            <person name="Nakajima M."/>
            <person name="Narusaka M."/>
            <person name="Seki M."/>
            <person name="Sakurai T."/>
            <person name="Satou M."/>
            <person name="Tamse R."/>
            <person name="Vaysberg M."/>
            <person name="Wallender E.K."/>
            <person name="Wong C."/>
            <person name="Yamamura Y."/>
            <person name="Yuan S."/>
            <person name="Shinozaki K."/>
            <person name="Davis R.W."/>
            <person name="Theologis A."/>
            <person name="Ecker J.R."/>
        </authorList>
    </citation>
    <scope>NUCLEOTIDE SEQUENCE [LARGE SCALE MRNA]</scope>
    <source>
        <strain>cv. Columbia</strain>
    </source>
</reference>
<reference key="4">
    <citation type="journal article" date="2012" name="Mol. Cell. Proteomics">
        <title>Comparative large-scale characterisation of plant vs. mammal proteins reveals similar and idiosyncratic N-alpha acetylation features.</title>
        <authorList>
            <person name="Bienvenut W.V."/>
            <person name="Sumpton D."/>
            <person name="Martinez A."/>
            <person name="Lilla S."/>
            <person name="Espagne C."/>
            <person name="Meinnel T."/>
            <person name="Giglione C."/>
        </authorList>
    </citation>
    <scope>ACETYLATION [LARGE SCALE ANALYSIS] AT ALA-2</scope>
    <scope>CLEAVAGE OF INITIATOR METHIONINE [LARGE SCALE ANALYSIS]</scope>
    <scope>IDENTIFICATION BY MASS SPECTROMETRY [LARGE SCALE ANALYSIS]</scope>
</reference>
<comment type="similarity">
    <text evidence="1">Belongs to the UPF0725 (EMB2204) family.</text>
</comment>
<comment type="sequence caution" evidence="1">
    <conflict type="erroneous gene model prediction">
        <sequence resource="EMBL-CDS" id="AAF87154"/>
    </conflict>
    <text>The predicted gene At1g23960 has been split into 2 genes: At1g23960 and At1g23970.</text>
</comment>